<proteinExistence type="evidence at transcript level"/>
<reference key="1">
    <citation type="journal article" date="1989" name="J. Mol. Biol.">
        <title>Complementary DNA cloning of a protein highly homologous to mammalian sarcoplasmic reticulum Ca-ATPase from the crustacean Artemia.</title>
        <authorList>
            <person name="Palmero I."/>
            <person name="Sastre L."/>
        </authorList>
    </citation>
    <scope>NUCLEOTIDE SEQUENCE [MRNA]</scope>
</reference>
<reference key="2">
    <citation type="journal article" date="1993" name="J. Biol. Chem.">
        <title>Similar alternative splicing events generate two sarcoplasmic or endoplasmic reticulum Ca-ATPase isoforms in the crustacean Artemia franciscana and in vertebrates.</title>
        <authorList>
            <person name="Escalante R."/>
            <person name="Sastre L."/>
        </authorList>
    </citation>
    <scope>NUCLEOTIDE SEQUENCE [GENOMIC DNA] OF 354-1003</scope>
    <source>
        <tissue>Embryo</tissue>
    </source>
</reference>
<feature type="chain" id="PRO_0000046226" description="Calcium-transporting ATPase sarcoplasmic/endoplasmic reticulum type">
    <location>
        <begin position="1"/>
        <end position="1003"/>
    </location>
</feature>
<feature type="topological domain" description="Cytoplasmic" evidence="2">
    <location>
        <begin position="1"/>
        <end position="59"/>
    </location>
</feature>
<feature type="transmembrane region" description="Helical" evidence="2">
    <location>
        <begin position="60"/>
        <end position="78"/>
    </location>
</feature>
<feature type="topological domain" description="Extracellular" evidence="2">
    <location>
        <begin position="79"/>
        <end position="89"/>
    </location>
</feature>
<feature type="transmembrane region" description="Helical" evidence="2">
    <location>
        <begin position="90"/>
        <end position="110"/>
    </location>
</feature>
<feature type="topological domain" description="Cytoplasmic" evidence="2">
    <location>
        <begin position="111"/>
        <end position="262"/>
    </location>
</feature>
<feature type="transmembrane region" description="Helical" evidence="2">
    <location>
        <begin position="263"/>
        <end position="282"/>
    </location>
</feature>
<feature type="topological domain" description="Extracellular" evidence="2">
    <location>
        <begin position="283"/>
        <end position="300"/>
    </location>
</feature>
<feature type="transmembrane region" description="Helical" evidence="2">
    <location>
        <begin position="301"/>
        <end position="318"/>
    </location>
</feature>
<feature type="topological domain" description="Cytoplasmic" evidence="2">
    <location>
        <begin position="319"/>
        <end position="775"/>
    </location>
</feature>
<feature type="transmembrane region" description="Helical" evidence="2">
    <location>
        <begin position="776"/>
        <end position="799"/>
    </location>
</feature>
<feature type="topological domain" description="Extracellular" evidence="2">
    <location>
        <begin position="800"/>
        <end position="840"/>
    </location>
</feature>
<feature type="transmembrane region" description="Helical" evidence="2">
    <location>
        <begin position="841"/>
        <end position="863"/>
    </location>
</feature>
<feature type="topological domain" description="Cytoplasmic" evidence="2">
    <location>
        <begin position="864"/>
        <end position="898"/>
    </location>
</feature>
<feature type="transmembrane region" description="Helical" evidence="2">
    <location>
        <begin position="899"/>
        <end position="917"/>
    </location>
</feature>
<feature type="topological domain" description="Extracellular" evidence="2">
    <location>
        <begin position="918"/>
        <end position="934"/>
    </location>
</feature>
<feature type="transmembrane region" description="Helical" evidence="2">
    <location>
        <begin position="935"/>
        <end position="954"/>
    </location>
</feature>
<feature type="topological domain" description="Cytoplasmic" evidence="2">
    <location>
        <begin position="955"/>
        <end position="1003"/>
    </location>
</feature>
<feature type="active site" description="4-aspartylphosphate intermediate" evidence="1">
    <location>
        <position position="354"/>
    </location>
</feature>
<feature type="binding site" evidence="1">
    <location>
        <position position="519"/>
    </location>
    <ligand>
        <name>ATP</name>
        <dbReference type="ChEBI" id="CHEBI:30616"/>
    </ligand>
</feature>
<feature type="splice variant" id="VSP_000412" description="In isoform 2." evidence="3">
    <original>EFSFIK</original>
    <variation>GMPLSSYFVDAWGLVLAWALFFGVIFYSPL</variation>
    <location>
        <begin position="998"/>
        <end position="1003"/>
    </location>
</feature>
<feature type="sequence conflict" description="In Ref. 2; CAA51262." evidence="3" ref="2">
    <original>T</original>
    <variation>A</variation>
    <location>
        <position position="481"/>
    </location>
</feature>
<feature type="sequence conflict" description="In Ref. 2; CAA51262." evidence="3" ref="2">
    <original>P</original>
    <variation>Q</variation>
    <location>
        <position position="793"/>
    </location>
</feature>
<keyword id="KW-0025">Alternative splicing</keyword>
<keyword id="KW-0067">ATP-binding</keyword>
<keyword id="KW-0106">Calcium</keyword>
<keyword id="KW-0109">Calcium transport</keyword>
<keyword id="KW-0406">Ion transport</keyword>
<keyword id="KW-0460">Magnesium</keyword>
<keyword id="KW-0472">Membrane</keyword>
<keyword id="KW-0547">Nucleotide-binding</keyword>
<keyword id="KW-0597">Phosphoprotein</keyword>
<keyword id="KW-0703">Sarcoplasmic reticulum</keyword>
<keyword id="KW-1278">Translocase</keyword>
<keyword id="KW-0812">Transmembrane</keyword>
<keyword id="KW-1133">Transmembrane helix</keyword>
<keyword id="KW-0813">Transport</keyword>
<evidence type="ECO:0000250" key="1"/>
<evidence type="ECO:0000255" key="2"/>
<evidence type="ECO:0000305" key="3"/>
<comment type="function">
    <text>This magnesium-dependent enzyme catalyzes the hydrolysis of ATP coupled with the transport of the calcium.</text>
</comment>
<comment type="catalytic activity">
    <reaction>
        <text>Ca(2+)(in) + ATP + H2O = Ca(2+)(out) + ADP + phosphate + H(+)</text>
        <dbReference type="Rhea" id="RHEA:18105"/>
        <dbReference type="ChEBI" id="CHEBI:15377"/>
        <dbReference type="ChEBI" id="CHEBI:15378"/>
        <dbReference type="ChEBI" id="CHEBI:29108"/>
        <dbReference type="ChEBI" id="CHEBI:30616"/>
        <dbReference type="ChEBI" id="CHEBI:43474"/>
        <dbReference type="ChEBI" id="CHEBI:456216"/>
        <dbReference type="EC" id="7.2.2.10"/>
    </reaction>
</comment>
<comment type="subcellular location">
    <subcellularLocation>
        <location>Sarcoplasmic reticulum membrane</location>
        <topology>Multi-pass membrane protein</topology>
    </subcellularLocation>
</comment>
<comment type="alternative products">
    <event type="alternative splicing"/>
    <isoform>
        <id>P35316-1</id>
        <name>1</name>
        <sequence type="displayed"/>
    </isoform>
    <isoform>
        <id>P35316-2</id>
        <name>2</name>
        <sequence type="described" ref="VSP_000412"/>
    </isoform>
</comment>
<comment type="developmental stage">
    <text>Isoform 2 (long form) is expressed only in early stages of embryonic development (cysts), while isoform 1 (short form) is also found in later embryonic stages and adults.</text>
</comment>
<comment type="miscellaneous">
    <molecule>Isoform 2</molecule>
    <text evidence="3">Presents an extension, a potential transmembrane domain, which may have an important functional role.</text>
</comment>
<comment type="similarity">
    <text evidence="3">Belongs to the cation transport ATPase (P-type) (TC 3.A.3) family.</text>
</comment>
<name>ATC_ARTSF</name>
<accession>P35316</accession>
<sequence>MEDAHAKKWEEVVDYFGVDPERGLALEQVKKNQEKYGPNELPAEEGKSLLTLILEQFDDLLVKILLLAAIISLVLALFEEHDDEAEQLTAYVEPFVILLILIANAVVGVWQEKNAESAIEALKEYEPEMGKVIRADKTGIQKIKARDLVPGDIVEISVGDKIPADLRLISILSTTLRIDQSILTGESVSVIKHTDPVPDPRAVNQDKKNMLFSGTNVSAGKARGVVMGTGLNTAIGSIRTQMFETEEMKTPLQQKLDEFGEQLSKVISVICVAVWAINIGHFNDPAHGGSWIKGAIYYFKIAVALAVAAIPEGLPAVITTCLALGTRRMAKKNAIVRSLPSVETLGCTSVICSDKTGTLTTNQMSVSRMFVFKDIPDDAAPELYQFELTGSTYEPIGETFMQGQKINAADYDAVKEITTICMMCNDSAIDFNEYKQAFEKVGEATETALIVLGEKLNPYNLSKAGKDRRSAALVVREDMDTRWKKEFTLEFSRDRKSMSSYCVPLKAGLLSNGPKMFVKGAPEGVLDRCTHVRVGTKKVPMTPAIMDKILEVTRAYGTGRDTLRCLALATIDDPMDPKDMDIIDSTKFVKYEQNCTFVGVVGMLDPPRKEVLDAIERCRAAGIRVIVITGDNKATAEAICRRIGVFGEDENTEGMAYTGREFDDLSVEGQRDAVARSRLFARVEPFHKSKIVEYLQGMGEISAMTGDGVNDAPALKKAEIGIAMGSGTAVAKSAAEMVLADDNFSTIVAAVEEGRAIYNNMKQFIRYLISSNIGEVVSIFLTAALGLPEALIPVQLLWVNLVTDGLPATALGFNPPDLDIMNKPPRRADEGLITGWLFFRYMAIGTYVGAATVGAAAHWFMMSPTGPGLNFYQLSHHLQCTPENEYFEGIDCEIFSDPHPMTMALSVLVTIEMLNAINSLSENQSLLVMPPWSNIWLISAICLSMTLHFVILYVEILSTVFQICPLTLTEWIVVLKISFPVLLLDEVLKFVARKYTDEFSFIK</sequence>
<protein>
    <recommendedName>
        <fullName>Calcium-transporting ATPase sarcoplasmic/endoplasmic reticulum type</fullName>
        <ecNumber>7.2.2.10</ecNumber>
    </recommendedName>
    <alternativeName>
        <fullName>Calcium pump</fullName>
    </alternativeName>
</protein>
<dbReference type="EC" id="7.2.2.10"/>
<dbReference type="EMBL" id="X51674">
    <property type="protein sequence ID" value="CAA35980.1"/>
    <property type="molecule type" value="mRNA"/>
</dbReference>
<dbReference type="EMBL" id="X72713">
    <property type="protein sequence ID" value="CAA51262.1"/>
    <property type="molecule type" value="Genomic_DNA"/>
</dbReference>
<dbReference type="PIR" id="S07526">
    <property type="entry name" value="S07526"/>
</dbReference>
<dbReference type="PIR" id="S32230">
    <property type="entry name" value="S32230"/>
</dbReference>
<dbReference type="SMR" id="P35316"/>
<dbReference type="GO" id="GO:0033017">
    <property type="term" value="C:sarcoplasmic reticulum membrane"/>
    <property type="evidence" value="ECO:0007669"/>
    <property type="project" value="UniProtKB-SubCell"/>
</dbReference>
<dbReference type="GO" id="GO:0005524">
    <property type="term" value="F:ATP binding"/>
    <property type="evidence" value="ECO:0007669"/>
    <property type="project" value="UniProtKB-KW"/>
</dbReference>
<dbReference type="GO" id="GO:0016887">
    <property type="term" value="F:ATP hydrolysis activity"/>
    <property type="evidence" value="ECO:0007669"/>
    <property type="project" value="InterPro"/>
</dbReference>
<dbReference type="GO" id="GO:0005388">
    <property type="term" value="F:P-type calcium transporter activity"/>
    <property type="evidence" value="ECO:0007669"/>
    <property type="project" value="UniProtKB-EC"/>
</dbReference>
<dbReference type="CDD" id="cd02083">
    <property type="entry name" value="P-type_ATPase_SERCA"/>
    <property type="match status" value="1"/>
</dbReference>
<dbReference type="FunFam" id="3.40.1110.10:FF:000003">
    <property type="entry name" value="Calcium-transporting ATPase"/>
    <property type="match status" value="1"/>
</dbReference>
<dbReference type="FunFam" id="3.40.50.1000:FF:000005">
    <property type="entry name" value="Calcium-transporting ATPase 1"/>
    <property type="match status" value="1"/>
</dbReference>
<dbReference type="FunFam" id="1.20.1110.10:FF:000065">
    <property type="entry name" value="Sarcoplasmic/endoplasmic reticulum calcium ATPase 1"/>
    <property type="match status" value="2"/>
</dbReference>
<dbReference type="FunFam" id="2.70.150.10:FF:000160">
    <property type="entry name" value="Sarcoplasmic/endoplasmic reticulum calcium ATPase 1"/>
    <property type="match status" value="1"/>
</dbReference>
<dbReference type="Gene3D" id="3.40.1110.10">
    <property type="entry name" value="Calcium-transporting ATPase, cytoplasmic domain N"/>
    <property type="match status" value="1"/>
</dbReference>
<dbReference type="Gene3D" id="2.70.150.10">
    <property type="entry name" value="Calcium-transporting ATPase, cytoplasmic transduction domain A"/>
    <property type="match status" value="1"/>
</dbReference>
<dbReference type="Gene3D" id="1.20.1110.10">
    <property type="entry name" value="Calcium-transporting ATPase, transmembrane domain"/>
    <property type="match status" value="1"/>
</dbReference>
<dbReference type="Gene3D" id="3.40.50.1000">
    <property type="entry name" value="HAD superfamily/HAD-like"/>
    <property type="match status" value="1"/>
</dbReference>
<dbReference type="InterPro" id="IPR006068">
    <property type="entry name" value="ATPase_P-typ_cation-transptr_C"/>
</dbReference>
<dbReference type="InterPro" id="IPR004014">
    <property type="entry name" value="ATPase_P-typ_cation-transptr_N"/>
</dbReference>
<dbReference type="InterPro" id="IPR023299">
    <property type="entry name" value="ATPase_P-typ_cyto_dom_N"/>
</dbReference>
<dbReference type="InterPro" id="IPR018303">
    <property type="entry name" value="ATPase_P-typ_P_site"/>
</dbReference>
<dbReference type="InterPro" id="IPR023298">
    <property type="entry name" value="ATPase_P-typ_TM_dom_sf"/>
</dbReference>
<dbReference type="InterPro" id="IPR008250">
    <property type="entry name" value="ATPase_P-typ_transduc_dom_A_sf"/>
</dbReference>
<dbReference type="InterPro" id="IPR036412">
    <property type="entry name" value="HAD-like_sf"/>
</dbReference>
<dbReference type="InterPro" id="IPR023214">
    <property type="entry name" value="HAD_sf"/>
</dbReference>
<dbReference type="InterPro" id="IPR005782">
    <property type="entry name" value="P-type_ATPase_IIA"/>
</dbReference>
<dbReference type="InterPro" id="IPR001757">
    <property type="entry name" value="P_typ_ATPase"/>
</dbReference>
<dbReference type="InterPro" id="IPR044492">
    <property type="entry name" value="P_typ_ATPase_HD_dom"/>
</dbReference>
<dbReference type="NCBIfam" id="TIGR01116">
    <property type="entry name" value="ATPase-IIA1_Ca"/>
    <property type="match status" value="1"/>
</dbReference>
<dbReference type="NCBIfam" id="TIGR01494">
    <property type="entry name" value="ATPase_P-type"/>
    <property type="match status" value="3"/>
</dbReference>
<dbReference type="PANTHER" id="PTHR42861">
    <property type="entry name" value="CALCIUM-TRANSPORTING ATPASE"/>
    <property type="match status" value="1"/>
</dbReference>
<dbReference type="Pfam" id="PF13246">
    <property type="entry name" value="Cation_ATPase"/>
    <property type="match status" value="1"/>
</dbReference>
<dbReference type="Pfam" id="PF00689">
    <property type="entry name" value="Cation_ATPase_C"/>
    <property type="match status" value="1"/>
</dbReference>
<dbReference type="Pfam" id="PF00690">
    <property type="entry name" value="Cation_ATPase_N"/>
    <property type="match status" value="1"/>
</dbReference>
<dbReference type="Pfam" id="PF00122">
    <property type="entry name" value="E1-E2_ATPase"/>
    <property type="match status" value="1"/>
</dbReference>
<dbReference type="Pfam" id="PF00702">
    <property type="entry name" value="Hydrolase"/>
    <property type="match status" value="1"/>
</dbReference>
<dbReference type="PRINTS" id="PR00119">
    <property type="entry name" value="CATATPASE"/>
</dbReference>
<dbReference type="SFLD" id="SFLDG00002">
    <property type="entry name" value="C1.7:_P-type_atpase_like"/>
    <property type="match status" value="1"/>
</dbReference>
<dbReference type="SFLD" id="SFLDF00027">
    <property type="entry name" value="p-type_atpase"/>
    <property type="match status" value="1"/>
</dbReference>
<dbReference type="SMART" id="SM00831">
    <property type="entry name" value="Cation_ATPase_N"/>
    <property type="match status" value="1"/>
</dbReference>
<dbReference type="SUPFAM" id="SSF81653">
    <property type="entry name" value="Calcium ATPase, transduction domain A"/>
    <property type="match status" value="1"/>
</dbReference>
<dbReference type="SUPFAM" id="SSF81665">
    <property type="entry name" value="Calcium ATPase, transmembrane domain M"/>
    <property type="match status" value="1"/>
</dbReference>
<dbReference type="SUPFAM" id="SSF56784">
    <property type="entry name" value="HAD-like"/>
    <property type="match status" value="1"/>
</dbReference>
<dbReference type="SUPFAM" id="SSF81660">
    <property type="entry name" value="Metal cation-transporting ATPase, ATP-binding domain N"/>
    <property type="match status" value="1"/>
</dbReference>
<dbReference type="PROSITE" id="PS00154">
    <property type="entry name" value="ATPASE_E1_E2"/>
    <property type="match status" value="1"/>
</dbReference>
<organism>
    <name type="scientific">Artemia franciscana</name>
    <name type="common">Brine shrimp</name>
    <name type="synonym">Artemia sanfranciscana</name>
    <dbReference type="NCBI Taxonomy" id="6661"/>
    <lineage>
        <taxon>Eukaryota</taxon>
        <taxon>Metazoa</taxon>
        <taxon>Ecdysozoa</taxon>
        <taxon>Arthropoda</taxon>
        <taxon>Crustacea</taxon>
        <taxon>Branchiopoda</taxon>
        <taxon>Anostraca</taxon>
        <taxon>Artemiidae</taxon>
        <taxon>Artemia</taxon>
    </lineage>
</organism>